<protein>
    <recommendedName>
        <fullName evidence="1">Large ribosomal subunit protein bL35</fullName>
    </recommendedName>
    <alternativeName>
        <fullName evidence="3">50S ribosomal protein L35</fullName>
    </alternativeName>
</protein>
<sequence>MPKLKTKSGAKKRFKVTGTGKVMHAQRGKRHGMIKRTKKQIRQLRGTRVLFKTDGDNVKKYFLPNA</sequence>
<accession>A4YJM8</accession>
<dbReference type="EMBL" id="CU234118">
    <property type="protein sequence ID" value="CAL74104.1"/>
    <property type="molecule type" value="Genomic_DNA"/>
</dbReference>
<dbReference type="RefSeq" id="WP_006612327.1">
    <property type="nucleotide sequence ID" value="NC_009445.1"/>
</dbReference>
<dbReference type="SMR" id="A4YJM8"/>
<dbReference type="STRING" id="114615.BRADO0137"/>
<dbReference type="KEGG" id="bra:BRADO0137"/>
<dbReference type="eggNOG" id="COG0291">
    <property type="taxonomic scope" value="Bacteria"/>
</dbReference>
<dbReference type="HOGENOM" id="CLU_169643_2_1_5"/>
<dbReference type="OrthoDB" id="9804851at2"/>
<dbReference type="Proteomes" id="UP000001994">
    <property type="component" value="Chromosome"/>
</dbReference>
<dbReference type="GO" id="GO:0022625">
    <property type="term" value="C:cytosolic large ribosomal subunit"/>
    <property type="evidence" value="ECO:0007669"/>
    <property type="project" value="TreeGrafter"/>
</dbReference>
<dbReference type="GO" id="GO:0003735">
    <property type="term" value="F:structural constituent of ribosome"/>
    <property type="evidence" value="ECO:0007669"/>
    <property type="project" value="InterPro"/>
</dbReference>
<dbReference type="GO" id="GO:0006412">
    <property type="term" value="P:translation"/>
    <property type="evidence" value="ECO:0007669"/>
    <property type="project" value="UniProtKB-UniRule"/>
</dbReference>
<dbReference type="FunFam" id="4.10.410.60:FF:000001">
    <property type="entry name" value="50S ribosomal protein L35"/>
    <property type="match status" value="1"/>
</dbReference>
<dbReference type="Gene3D" id="4.10.410.60">
    <property type="match status" value="1"/>
</dbReference>
<dbReference type="HAMAP" id="MF_00514">
    <property type="entry name" value="Ribosomal_bL35"/>
    <property type="match status" value="1"/>
</dbReference>
<dbReference type="InterPro" id="IPR001706">
    <property type="entry name" value="Ribosomal_bL35"/>
</dbReference>
<dbReference type="InterPro" id="IPR021137">
    <property type="entry name" value="Ribosomal_bL35-like"/>
</dbReference>
<dbReference type="InterPro" id="IPR018265">
    <property type="entry name" value="Ribosomal_bL35_CS"/>
</dbReference>
<dbReference type="InterPro" id="IPR037229">
    <property type="entry name" value="Ribosomal_bL35_sf"/>
</dbReference>
<dbReference type="NCBIfam" id="TIGR00001">
    <property type="entry name" value="rpmI_bact"/>
    <property type="match status" value="1"/>
</dbReference>
<dbReference type="PANTHER" id="PTHR33343">
    <property type="entry name" value="54S RIBOSOMAL PROTEIN BL35M"/>
    <property type="match status" value="1"/>
</dbReference>
<dbReference type="PANTHER" id="PTHR33343:SF1">
    <property type="entry name" value="LARGE RIBOSOMAL SUBUNIT PROTEIN BL35M"/>
    <property type="match status" value="1"/>
</dbReference>
<dbReference type="Pfam" id="PF01632">
    <property type="entry name" value="Ribosomal_L35p"/>
    <property type="match status" value="1"/>
</dbReference>
<dbReference type="PRINTS" id="PR00064">
    <property type="entry name" value="RIBOSOMALL35"/>
</dbReference>
<dbReference type="SUPFAM" id="SSF143034">
    <property type="entry name" value="L35p-like"/>
    <property type="match status" value="1"/>
</dbReference>
<dbReference type="PROSITE" id="PS00936">
    <property type="entry name" value="RIBOSOMAL_L35"/>
    <property type="match status" value="1"/>
</dbReference>
<gene>
    <name evidence="1" type="primary">rpmI</name>
    <name type="ordered locus">BRADO0137</name>
</gene>
<comment type="similarity">
    <text evidence="1">Belongs to the bacterial ribosomal protein bL35 family.</text>
</comment>
<reference key="1">
    <citation type="journal article" date="2007" name="Science">
        <title>Legumes symbioses: absence of nod genes in photosynthetic bradyrhizobia.</title>
        <authorList>
            <person name="Giraud E."/>
            <person name="Moulin L."/>
            <person name="Vallenet D."/>
            <person name="Barbe V."/>
            <person name="Cytryn E."/>
            <person name="Avarre J.-C."/>
            <person name="Jaubert M."/>
            <person name="Simon D."/>
            <person name="Cartieaux F."/>
            <person name="Prin Y."/>
            <person name="Bena G."/>
            <person name="Hannibal L."/>
            <person name="Fardoux J."/>
            <person name="Kojadinovic M."/>
            <person name="Vuillet L."/>
            <person name="Lajus A."/>
            <person name="Cruveiller S."/>
            <person name="Rouy Z."/>
            <person name="Mangenot S."/>
            <person name="Segurens B."/>
            <person name="Dossat C."/>
            <person name="Franck W.L."/>
            <person name="Chang W.-S."/>
            <person name="Saunders E."/>
            <person name="Bruce D."/>
            <person name="Richardson P."/>
            <person name="Normand P."/>
            <person name="Dreyfus B."/>
            <person name="Pignol D."/>
            <person name="Stacey G."/>
            <person name="Emerich D."/>
            <person name="Vermeglio A."/>
            <person name="Medigue C."/>
            <person name="Sadowsky M."/>
        </authorList>
    </citation>
    <scope>NUCLEOTIDE SEQUENCE [LARGE SCALE GENOMIC DNA]</scope>
    <source>
        <strain>ORS 278</strain>
    </source>
</reference>
<evidence type="ECO:0000255" key="1">
    <source>
        <dbReference type="HAMAP-Rule" id="MF_00514"/>
    </source>
</evidence>
<evidence type="ECO:0000256" key="2">
    <source>
        <dbReference type="SAM" id="MobiDB-lite"/>
    </source>
</evidence>
<evidence type="ECO:0000305" key="3"/>
<proteinExistence type="inferred from homology"/>
<feature type="chain" id="PRO_1000050663" description="Large ribosomal subunit protein bL35">
    <location>
        <begin position="1"/>
        <end position="66"/>
    </location>
</feature>
<feature type="region of interest" description="Disordered" evidence="2">
    <location>
        <begin position="1"/>
        <end position="40"/>
    </location>
</feature>
<feature type="compositionally biased region" description="Basic residues" evidence="2">
    <location>
        <begin position="1"/>
        <end position="15"/>
    </location>
</feature>
<feature type="compositionally biased region" description="Basic residues" evidence="2">
    <location>
        <begin position="24"/>
        <end position="40"/>
    </location>
</feature>
<keyword id="KW-1185">Reference proteome</keyword>
<keyword id="KW-0687">Ribonucleoprotein</keyword>
<keyword id="KW-0689">Ribosomal protein</keyword>
<name>RL35_BRASO</name>
<organism>
    <name type="scientific">Bradyrhizobium sp. (strain ORS 278)</name>
    <dbReference type="NCBI Taxonomy" id="114615"/>
    <lineage>
        <taxon>Bacteria</taxon>
        <taxon>Pseudomonadati</taxon>
        <taxon>Pseudomonadota</taxon>
        <taxon>Alphaproteobacteria</taxon>
        <taxon>Hyphomicrobiales</taxon>
        <taxon>Nitrobacteraceae</taxon>
        <taxon>Bradyrhizobium</taxon>
    </lineage>
</organism>